<comment type="function">
    <text evidence="1">Part of the ABC transporter complex PotABCD involved in spermidine/putrescine import. Responsible for energy coupling to the transport system.</text>
</comment>
<comment type="catalytic activity">
    <reaction evidence="1">
        <text>ATP + H2O + polyamine-[polyamine-binding protein]Side 1 = ADP + phosphate + polyamineSide 2 + [polyamine-binding protein]Side 1.</text>
        <dbReference type="EC" id="7.6.2.11"/>
    </reaction>
</comment>
<comment type="subunit">
    <text evidence="1">The complex is composed of two ATP-binding proteins (PotA), two transmembrane proteins (PotB and PotC) and a solute-binding protein (PotD).</text>
</comment>
<comment type="subcellular location">
    <subcellularLocation>
        <location evidence="1">Cell inner membrane</location>
        <topology evidence="1">Peripheral membrane protein</topology>
    </subcellularLocation>
</comment>
<comment type="similarity">
    <text evidence="1">Belongs to the ABC transporter superfamily. Spermidine/putrescine importer (TC 3.A.1.11.1) family.</text>
</comment>
<comment type="sequence caution" evidence="2">
    <conflict type="erroneous initiation">
        <sequence resource="EMBL-CDS" id="AAK02348"/>
    </conflict>
</comment>
<evidence type="ECO:0000255" key="1">
    <source>
        <dbReference type="HAMAP-Rule" id="MF_01726"/>
    </source>
</evidence>
<evidence type="ECO:0000305" key="2"/>
<gene>
    <name evidence="1" type="primary">potA</name>
    <name type="ordered locus">PM0264</name>
</gene>
<accession>Q9CP06</accession>
<dbReference type="EC" id="7.6.2.11" evidence="1"/>
<dbReference type="EMBL" id="AE004439">
    <property type="protein sequence ID" value="AAK02348.1"/>
    <property type="status" value="ALT_INIT"/>
    <property type="molecule type" value="Genomic_DNA"/>
</dbReference>
<dbReference type="RefSeq" id="WP_005724659.1">
    <property type="nucleotide sequence ID" value="NC_002663.1"/>
</dbReference>
<dbReference type="SMR" id="Q9CP06"/>
<dbReference type="STRING" id="272843.PM0264"/>
<dbReference type="EnsemblBacteria" id="AAK02348">
    <property type="protein sequence ID" value="AAK02348"/>
    <property type="gene ID" value="PM0264"/>
</dbReference>
<dbReference type="GeneID" id="77207617"/>
<dbReference type="KEGG" id="pmu:PM0264"/>
<dbReference type="HOGENOM" id="CLU_000604_1_1_6"/>
<dbReference type="OrthoDB" id="9802264at2"/>
<dbReference type="Proteomes" id="UP000000809">
    <property type="component" value="Chromosome"/>
</dbReference>
<dbReference type="GO" id="GO:0043190">
    <property type="term" value="C:ATP-binding cassette (ABC) transporter complex"/>
    <property type="evidence" value="ECO:0007669"/>
    <property type="project" value="InterPro"/>
</dbReference>
<dbReference type="GO" id="GO:0015594">
    <property type="term" value="F:ABC-type putrescine transporter activity"/>
    <property type="evidence" value="ECO:0007669"/>
    <property type="project" value="InterPro"/>
</dbReference>
<dbReference type="GO" id="GO:0005524">
    <property type="term" value="F:ATP binding"/>
    <property type="evidence" value="ECO:0007669"/>
    <property type="project" value="UniProtKB-KW"/>
</dbReference>
<dbReference type="GO" id="GO:0016887">
    <property type="term" value="F:ATP hydrolysis activity"/>
    <property type="evidence" value="ECO:0007669"/>
    <property type="project" value="InterPro"/>
</dbReference>
<dbReference type="CDD" id="cd03300">
    <property type="entry name" value="ABC_PotA_N"/>
    <property type="match status" value="1"/>
</dbReference>
<dbReference type="FunFam" id="3.40.50.300:FF:000133">
    <property type="entry name" value="Spermidine/putrescine import ATP-binding protein PotA"/>
    <property type="match status" value="1"/>
</dbReference>
<dbReference type="Gene3D" id="2.40.50.100">
    <property type="match status" value="1"/>
</dbReference>
<dbReference type="Gene3D" id="3.40.50.300">
    <property type="entry name" value="P-loop containing nucleotide triphosphate hydrolases"/>
    <property type="match status" value="1"/>
</dbReference>
<dbReference type="InterPro" id="IPR003593">
    <property type="entry name" value="AAA+_ATPase"/>
</dbReference>
<dbReference type="InterPro" id="IPR050093">
    <property type="entry name" value="ABC_SmlMolc_Importer"/>
</dbReference>
<dbReference type="InterPro" id="IPR003439">
    <property type="entry name" value="ABC_transporter-like_ATP-bd"/>
</dbReference>
<dbReference type="InterPro" id="IPR017871">
    <property type="entry name" value="ABC_transporter-like_CS"/>
</dbReference>
<dbReference type="InterPro" id="IPR008995">
    <property type="entry name" value="Mo/tungstate-bd_C_term_dom"/>
</dbReference>
<dbReference type="InterPro" id="IPR027417">
    <property type="entry name" value="P-loop_NTPase"/>
</dbReference>
<dbReference type="InterPro" id="IPR005893">
    <property type="entry name" value="PotA-like"/>
</dbReference>
<dbReference type="InterPro" id="IPR017879">
    <property type="entry name" value="PotA_ATP-bd"/>
</dbReference>
<dbReference type="InterPro" id="IPR013611">
    <property type="entry name" value="Transp-assoc_OB_typ2"/>
</dbReference>
<dbReference type="NCBIfam" id="TIGR01187">
    <property type="entry name" value="potA"/>
    <property type="match status" value="1"/>
</dbReference>
<dbReference type="NCBIfam" id="NF006987">
    <property type="entry name" value="PRK09452.1"/>
    <property type="match status" value="1"/>
</dbReference>
<dbReference type="PANTHER" id="PTHR42781">
    <property type="entry name" value="SPERMIDINE/PUTRESCINE IMPORT ATP-BINDING PROTEIN POTA"/>
    <property type="match status" value="1"/>
</dbReference>
<dbReference type="PANTHER" id="PTHR42781:SF4">
    <property type="entry name" value="SPERMIDINE_PUTRESCINE IMPORT ATP-BINDING PROTEIN POTA"/>
    <property type="match status" value="1"/>
</dbReference>
<dbReference type="Pfam" id="PF00005">
    <property type="entry name" value="ABC_tran"/>
    <property type="match status" value="1"/>
</dbReference>
<dbReference type="Pfam" id="PF08402">
    <property type="entry name" value="TOBE_2"/>
    <property type="match status" value="1"/>
</dbReference>
<dbReference type="SMART" id="SM00382">
    <property type="entry name" value="AAA"/>
    <property type="match status" value="1"/>
</dbReference>
<dbReference type="SUPFAM" id="SSF50331">
    <property type="entry name" value="MOP-like"/>
    <property type="match status" value="1"/>
</dbReference>
<dbReference type="SUPFAM" id="SSF52540">
    <property type="entry name" value="P-loop containing nucleoside triphosphate hydrolases"/>
    <property type="match status" value="1"/>
</dbReference>
<dbReference type="PROSITE" id="PS00211">
    <property type="entry name" value="ABC_TRANSPORTER_1"/>
    <property type="match status" value="1"/>
</dbReference>
<dbReference type="PROSITE" id="PS50893">
    <property type="entry name" value="ABC_TRANSPORTER_2"/>
    <property type="match status" value="1"/>
</dbReference>
<dbReference type="PROSITE" id="PS51305">
    <property type="entry name" value="POTA"/>
    <property type="match status" value="1"/>
</dbReference>
<protein>
    <recommendedName>
        <fullName evidence="1">Spermidine/putrescine import ATP-binding protein PotA</fullName>
        <ecNumber evidence="1">7.6.2.11</ecNumber>
    </recommendedName>
</protein>
<organism>
    <name type="scientific">Pasteurella multocida (strain Pm70)</name>
    <dbReference type="NCBI Taxonomy" id="272843"/>
    <lineage>
        <taxon>Bacteria</taxon>
        <taxon>Pseudomonadati</taxon>
        <taxon>Pseudomonadota</taxon>
        <taxon>Gammaproteobacteria</taxon>
        <taxon>Pasteurellales</taxon>
        <taxon>Pasteurellaceae</taxon>
        <taxon>Pasteurella</taxon>
    </lineage>
</organism>
<sequence>MESSVQNKPIIELRSITKSYGDKTIIENFNLTINNGEFLTILGPSGCGKTTVLRLLAGLEELDSGNIILDGEDITHVPAEQRHVNTVFQSYALFPHMTIFENVAFGLRMQKVPNEEIKPRVLEALRMVQLEEYAYSKPAQLSGGQQQRIAIARAVVNKPKVLLLDESLSALDYKLRKQMQNELKALQRKLGITFIFVTHDQEEALTMSDRIIVLRKGHIQQDGSPREIYEEPKNLFVAKFIGEINIFNATVLTRVDEKRVRANVEGRVCDIYTNLDVVAEQKLKVLLRPEDILIEELDENQSSKAIIGHVADRNYKGMTLESNITLDHNGMTVLVSEFFNEDDPNIDHSLGQKVALTWHEGWEVVLSDEE</sequence>
<proteinExistence type="inferred from homology"/>
<feature type="chain" id="PRO_0000286270" description="Spermidine/putrescine import ATP-binding protein PotA">
    <location>
        <begin position="1"/>
        <end position="370"/>
    </location>
</feature>
<feature type="domain" description="ABC transporter" evidence="1">
    <location>
        <begin position="11"/>
        <end position="241"/>
    </location>
</feature>
<feature type="binding site" evidence="1">
    <location>
        <begin position="43"/>
        <end position="50"/>
    </location>
    <ligand>
        <name>ATP</name>
        <dbReference type="ChEBI" id="CHEBI:30616"/>
    </ligand>
</feature>
<reference key="1">
    <citation type="journal article" date="2001" name="Proc. Natl. Acad. Sci. U.S.A.">
        <title>Complete genomic sequence of Pasteurella multocida Pm70.</title>
        <authorList>
            <person name="May B.J."/>
            <person name="Zhang Q."/>
            <person name="Li L.L."/>
            <person name="Paustian M.L."/>
            <person name="Whittam T.S."/>
            <person name="Kapur V."/>
        </authorList>
    </citation>
    <scope>NUCLEOTIDE SEQUENCE [LARGE SCALE GENOMIC DNA]</scope>
    <source>
        <strain>Pm70</strain>
    </source>
</reference>
<keyword id="KW-0067">ATP-binding</keyword>
<keyword id="KW-0997">Cell inner membrane</keyword>
<keyword id="KW-1003">Cell membrane</keyword>
<keyword id="KW-0472">Membrane</keyword>
<keyword id="KW-0547">Nucleotide-binding</keyword>
<keyword id="KW-1185">Reference proteome</keyword>
<keyword id="KW-1278">Translocase</keyword>
<keyword id="KW-0813">Transport</keyword>
<name>POTA_PASMU</name>